<proteinExistence type="inferred from homology"/>
<evidence type="ECO:0000255" key="1">
    <source>
        <dbReference type="HAMAP-Rule" id="MF_01393"/>
    </source>
</evidence>
<keyword id="KW-0066">ATP synthesis</keyword>
<keyword id="KW-0997">Cell inner membrane</keyword>
<keyword id="KW-1003">Cell membrane</keyword>
<keyword id="KW-0138">CF(0)</keyword>
<keyword id="KW-0375">Hydrogen ion transport</keyword>
<keyword id="KW-0406">Ion transport</keyword>
<keyword id="KW-0472">Membrane</keyword>
<keyword id="KW-0812">Transmembrane</keyword>
<keyword id="KW-1133">Transmembrane helix</keyword>
<keyword id="KW-0813">Transport</keyword>
<feature type="chain" id="PRO_0000362240" description="ATP synthase subunit a">
    <location>
        <begin position="1"/>
        <end position="252"/>
    </location>
</feature>
<feature type="transmembrane region" description="Helical" evidence="1">
    <location>
        <begin position="29"/>
        <end position="49"/>
    </location>
</feature>
<feature type="transmembrane region" description="Helical" evidence="1">
    <location>
        <begin position="87"/>
        <end position="107"/>
    </location>
</feature>
<feature type="transmembrane region" description="Helical" evidence="1">
    <location>
        <begin position="117"/>
        <end position="137"/>
    </location>
</feature>
<feature type="transmembrane region" description="Helical" evidence="1">
    <location>
        <begin position="146"/>
        <end position="166"/>
    </location>
</feature>
<feature type="transmembrane region" description="Helical" evidence="1">
    <location>
        <begin position="196"/>
        <end position="216"/>
    </location>
</feature>
<feature type="transmembrane region" description="Helical" evidence="1">
    <location>
        <begin position="219"/>
        <end position="239"/>
    </location>
</feature>
<name>ATP6_BARHE</name>
<accession>Q6G5L2</accession>
<reference key="1">
    <citation type="journal article" date="2004" name="Proc. Natl. Acad. Sci. U.S.A.">
        <title>The louse-borne human pathogen Bartonella quintana is a genomic derivative of the zoonotic agent Bartonella henselae.</title>
        <authorList>
            <person name="Alsmark U.C.M."/>
            <person name="Frank A.C."/>
            <person name="Karlberg E.O."/>
            <person name="Legault B.-A."/>
            <person name="Ardell D.H."/>
            <person name="Canbaeck B."/>
            <person name="Eriksson A.-S."/>
            <person name="Naeslund A.K."/>
            <person name="Handley S.A."/>
            <person name="Huvet M."/>
            <person name="La Scola B."/>
            <person name="Holmberg M."/>
            <person name="Andersson S.G.E."/>
        </authorList>
    </citation>
    <scope>NUCLEOTIDE SEQUENCE [LARGE SCALE GENOMIC DNA]</scope>
    <source>
        <strain>ATCC 49882 / DSM 28221 / CCUG 30454 / Houston 1</strain>
    </source>
</reference>
<comment type="function">
    <text evidence="1">Key component of the proton channel; it plays a direct role in the translocation of protons across the membrane.</text>
</comment>
<comment type="subunit">
    <text evidence="1">F-type ATPases have 2 components, CF(1) - the catalytic core - and CF(0) - the membrane proton channel. CF(1) has five subunits: alpha(3), beta(3), gamma(1), delta(1), epsilon(1). CF(0) has three main subunits: a(1), b(2) and c(9-12). The alpha and beta chains form an alternating ring which encloses part of the gamma chain. CF(1) is attached to CF(0) by a central stalk formed by the gamma and epsilon chains, while a peripheral stalk is formed by the delta and b chains.</text>
</comment>
<comment type="subcellular location">
    <subcellularLocation>
        <location evidence="1">Cell inner membrane</location>
        <topology evidence="1">Multi-pass membrane protein</topology>
    </subcellularLocation>
</comment>
<comment type="similarity">
    <text evidence="1">Belongs to the ATPase A chain family.</text>
</comment>
<protein>
    <recommendedName>
        <fullName evidence="1">ATP synthase subunit a</fullName>
    </recommendedName>
    <alternativeName>
        <fullName evidence="1">ATP synthase F0 sector subunit a</fullName>
    </alternativeName>
    <alternativeName>
        <fullName evidence="1">F-ATPase subunit 6</fullName>
    </alternativeName>
</protein>
<organism>
    <name type="scientific">Bartonella henselae (strain ATCC 49882 / DSM 28221 / CCUG 30454 / Houston 1)</name>
    <name type="common">Rochalimaea henselae</name>
    <dbReference type="NCBI Taxonomy" id="283166"/>
    <lineage>
        <taxon>Bacteria</taxon>
        <taxon>Pseudomonadati</taxon>
        <taxon>Pseudomonadota</taxon>
        <taxon>Alphaproteobacteria</taxon>
        <taxon>Hyphomicrobiales</taxon>
        <taxon>Bartonellaceae</taxon>
        <taxon>Bartonella</taxon>
    </lineage>
</organism>
<dbReference type="EMBL" id="BX897699">
    <property type="protein sequence ID" value="CAF27220.1"/>
    <property type="molecule type" value="Genomic_DNA"/>
</dbReference>
<dbReference type="RefSeq" id="WP_011180346.1">
    <property type="nucleotide sequence ID" value="NZ_LRIJ02000001.1"/>
</dbReference>
<dbReference type="SMR" id="Q6G5L2"/>
<dbReference type="PaxDb" id="283166-BH04110"/>
<dbReference type="EnsemblBacteria" id="CAF27220">
    <property type="protein sequence ID" value="CAF27220"/>
    <property type="gene ID" value="BH04110"/>
</dbReference>
<dbReference type="KEGG" id="bhe:BH04110"/>
<dbReference type="eggNOG" id="COG0356">
    <property type="taxonomic scope" value="Bacteria"/>
</dbReference>
<dbReference type="OrthoDB" id="9809130at2"/>
<dbReference type="Proteomes" id="UP000000421">
    <property type="component" value="Chromosome"/>
</dbReference>
<dbReference type="GO" id="GO:0005886">
    <property type="term" value="C:plasma membrane"/>
    <property type="evidence" value="ECO:0007669"/>
    <property type="project" value="UniProtKB-SubCell"/>
</dbReference>
<dbReference type="GO" id="GO:0045259">
    <property type="term" value="C:proton-transporting ATP synthase complex"/>
    <property type="evidence" value="ECO:0007669"/>
    <property type="project" value="UniProtKB-KW"/>
</dbReference>
<dbReference type="GO" id="GO:0046933">
    <property type="term" value="F:proton-transporting ATP synthase activity, rotational mechanism"/>
    <property type="evidence" value="ECO:0007669"/>
    <property type="project" value="UniProtKB-UniRule"/>
</dbReference>
<dbReference type="CDD" id="cd00310">
    <property type="entry name" value="ATP-synt_Fo_a_6"/>
    <property type="match status" value="1"/>
</dbReference>
<dbReference type="FunFam" id="1.20.120.220:FF:000003">
    <property type="entry name" value="ATP synthase subunit a"/>
    <property type="match status" value="1"/>
</dbReference>
<dbReference type="Gene3D" id="1.20.120.220">
    <property type="entry name" value="ATP synthase, F0 complex, subunit A"/>
    <property type="match status" value="1"/>
</dbReference>
<dbReference type="HAMAP" id="MF_01393">
    <property type="entry name" value="ATP_synth_a_bact"/>
    <property type="match status" value="1"/>
</dbReference>
<dbReference type="InterPro" id="IPR000568">
    <property type="entry name" value="ATP_synth_F0_asu"/>
</dbReference>
<dbReference type="InterPro" id="IPR023011">
    <property type="entry name" value="ATP_synth_F0_asu_AS"/>
</dbReference>
<dbReference type="InterPro" id="IPR045083">
    <property type="entry name" value="ATP_synth_F0_asu_bact/mt"/>
</dbReference>
<dbReference type="InterPro" id="IPR035908">
    <property type="entry name" value="F0_ATP_A_sf"/>
</dbReference>
<dbReference type="NCBIfam" id="TIGR01131">
    <property type="entry name" value="ATP_synt_6_or_A"/>
    <property type="match status" value="1"/>
</dbReference>
<dbReference type="NCBIfam" id="NF004482">
    <property type="entry name" value="PRK05815.2-4"/>
    <property type="match status" value="1"/>
</dbReference>
<dbReference type="PANTHER" id="PTHR11410">
    <property type="entry name" value="ATP SYNTHASE SUBUNIT A"/>
    <property type="match status" value="1"/>
</dbReference>
<dbReference type="PANTHER" id="PTHR11410:SF0">
    <property type="entry name" value="ATP SYNTHASE SUBUNIT A"/>
    <property type="match status" value="1"/>
</dbReference>
<dbReference type="Pfam" id="PF00119">
    <property type="entry name" value="ATP-synt_A"/>
    <property type="match status" value="1"/>
</dbReference>
<dbReference type="PRINTS" id="PR00123">
    <property type="entry name" value="ATPASEA"/>
</dbReference>
<dbReference type="SUPFAM" id="SSF81336">
    <property type="entry name" value="F1F0 ATP synthase subunit A"/>
    <property type="match status" value="1"/>
</dbReference>
<dbReference type="PROSITE" id="PS00449">
    <property type="entry name" value="ATPASE_A"/>
    <property type="match status" value="1"/>
</dbReference>
<sequence length="252" mass="27684">MTSHAPDPVHQFEVSRLINISIGNMDLSFTNVSFFIVATVVVSSVFLFISSSSRGLVPTRMQSVSEMAYEFVASTLRESSGVQGMQFFPLVFSLFTFILVANFIGLFPYFYTITSQIMITFSLAMLVIFTVISYGFYKHGVGFLKLFVPSGVPVLILPLVTMIEVISFFSRPISLSLRLFANMLAGHITLKVFSGFIVSMIGIGIMGVGGSILPLIMTVAITALEFLVAFLQAYVFTVLTCMYLNDAVHPGH</sequence>
<gene>
    <name evidence="1" type="primary">atpB</name>
    <name type="ordered locus">BH04110</name>
</gene>